<organism>
    <name type="scientific">Limosilactobacillus reuteri (strain DSM 20016)</name>
    <name type="common">Lactobacillus reuteri</name>
    <dbReference type="NCBI Taxonomy" id="557436"/>
    <lineage>
        <taxon>Bacteria</taxon>
        <taxon>Bacillati</taxon>
        <taxon>Bacillota</taxon>
        <taxon>Bacilli</taxon>
        <taxon>Lactobacillales</taxon>
        <taxon>Lactobacillaceae</taxon>
        <taxon>Limosilactobacillus</taxon>
    </lineage>
</organism>
<comment type="function">
    <text evidence="1">Responsible for the release of ribosomes from messenger RNA at the termination of protein biosynthesis. May increase the efficiency of translation by recycling ribosomes from one round of translation to another.</text>
</comment>
<comment type="subcellular location">
    <subcellularLocation>
        <location evidence="1">Cytoplasm</location>
    </subcellularLocation>
</comment>
<comment type="similarity">
    <text evidence="1">Belongs to the RRF family.</text>
</comment>
<dbReference type="EMBL" id="CP000705">
    <property type="protein sequence ID" value="ABQ82952.1"/>
    <property type="molecule type" value="Genomic_DNA"/>
</dbReference>
<dbReference type="RefSeq" id="WP_003668195.1">
    <property type="nucleotide sequence ID" value="NC_009513.1"/>
</dbReference>
<dbReference type="SMR" id="A5VJC8"/>
<dbReference type="STRING" id="557436.Lreu_0687"/>
<dbReference type="KEGG" id="lre:Lreu_0687"/>
<dbReference type="PATRIC" id="fig|557436.17.peg.760"/>
<dbReference type="eggNOG" id="COG0233">
    <property type="taxonomic scope" value="Bacteria"/>
</dbReference>
<dbReference type="HOGENOM" id="CLU_073981_2_0_9"/>
<dbReference type="Proteomes" id="UP000001991">
    <property type="component" value="Chromosome"/>
</dbReference>
<dbReference type="GO" id="GO:0005737">
    <property type="term" value="C:cytoplasm"/>
    <property type="evidence" value="ECO:0007669"/>
    <property type="project" value="UniProtKB-SubCell"/>
</dbReference>
<dbReference type="GO" id="GO:0043023">
    <property type="term" value="F:ribosomal large subunit binding"/>
    <property type="evidence" value="ECO:0007669"/>
    <property type="project" value="TreeGrafter"/>
</dbReference>
<dbReference type="GO" id="GO:0006415">
    <property type="term" value="P:translational termination"/>
    <property type="evidence" value="ECO:0007669"/>
    <property type="project" value="UniProtKB-UniRule"/>
</dbReference>
<dbReference type="CDD" id="cd00520">
    <property type="entry name" value="RRF"/>
    <property type="match status" value="1"/>
</dbReference>
<dbReference type="FunFam" id="1.10.132.20:FF:000001">
    <property type="entry name" value="Ribosome-recycling factor"/>
    <property type="match status" value="1"/>
</dbReference>
<dbReference type="FunFam" id="3.30.1360.40:FF:000001">
    <property type="entry name" value="Ribosome-recycling factor"/>
    <property type="match status" value="1"/>
</dbReference>
<dbReference type="Gene3D" id="3.30.1360.40">
    <property type="match status" value="1"/>
</dbReference>
<dbReference type="Gene3D" id="1.10.132.20">
    <property type="entry name" value="Ribosome-recycling factor"/>
    <property type="match status" value="1"/>
</dbReference>
<dbReference type="HAMAP" id="MF_00040">
    <property type="entry name" value="RRF"/>
    <property type="match status" value="1"/>
</dbReference>
<dbReference type="InterPro" id="IPR002661">
    <property type="entry name" value="Ribosome_recyc_fac"/>
</dbReference>
<dbReference type="InterPro" id="IPR023584">
    <property type="entry name" value="Ribosome_recyc_fac_dom"/>
</dbReference>
<dbReference type="InterPro" id="IPR036191">
    <property type="entry name" value="RRF_sf"/>
</dbReference>
<dbReference type="NCBIfam" id="TIGR00496">
    <property type="entry name" value="frr"/>
    <property type="match status" value="1"/>
</dbReference>
<dbReference type="PANTHER" id="PTHR20982:SF3">
    <property type="entry name" value="MITOCHONDRIAL RIBOSOME RECYCLING FACTOR PSEUDO 1"/>
    <property type="match status" value="1"/>
</dbReference>
<dbReference type="PANTHER" id="PTHR20982">
    <property type="entry name" value="RIBOSOME RECYCLING FACTOR"/>
    <property type="match status" value="1"/>
</dbReference>
<dbReference type="Pfam" id="PF01765">
    <property type="entry name" value="RRF"/>
    <property type="match status" value="1"/>
</dbReference>
<dbReference type="SUPFAM" id="SSF55194">
    <property type="entry name" value="Ribosome recycling factor, RRF"/>
    <property type="match status" value="1"/>
</dbReference>
<gene>
    <name evidence="1" type="primary">frr</name>
    <name type="ordered locus">Lreu_0687</name>
</gene>
<proteinExistence type="inferred from homology"/>
<accession>A5VJC8</accession>
<feature type="chain" id="PRO_1000057293" description="Ribosome-recycling factor">
    <location>
        <begin position="1"/>
        <end position="187"/>
    </location>
</feature>
<feature type="region of interest" description="Disordered" evidence="2">
    <location>
        <begin position="141"/>
        <end position="169"/>
    </location>
</feature>
<protein>
    <recommendedName>
        <fullName evidence="1">Ribosome-recycling factor</fullName>
        <shortName evidence="1">RRF</shortName>
    </recommendedName>
    <alternativeName>
        <fullName evidence="1">Ribosome-releasing factor</fullName>
    </alternativeName>
</protein>
<keyword id="KW-0963">Cytoplasm</keyword>
<keyword id="KW-0648">Protein biosynthesis</keyword>
<keyword id="KW-1185">Reference proteome</keyword>
<reference key="1">
    <citation type="journal article" date="2011" name="PLoS Genet.">
        <title>The evolution of host specialization in the vertebrate gut symbiont Lactobacillus reuteri.</title>
        <authorList>
            <person name="Frese S.A."/>
            <person name="Benson A.K."/>
            <person name="Tannock G.W."/>
            <person name="Loach D.M."/>
            <person name="Kim J."/>
            <person name="Zhang M."/>
            <person name="Oh P.L."/>
            <person name="Heng N.C."/>
            <person name="Patil P.B."/>
            <person name="Juge N."/>
            <person name="Mackenzie D.A."/>
            <person name="Pearson B.M."/>
            <person name="Lapidus A."/>
            <person name="Dalin E."/>
            <person name="Tice H."/>
            <person name="Goltsman E."/>
            <person name="Land M."/>
            <person name="Hauser L."/>
            <person name="Ivanova N."/>
            <person name="Kyrpides N.C."/>
            <person name="Walter J."/>
        </authorList>
    </citation>
    <scope>NUCLEOTIDE SEQUENCE [LARGE SCALE GENOMIC DNA]</scope>
    <source>
        <strain>DSM 20016</strain>
    </source>
</reference>
<evidence type="ECO:0000255" key="1">
    <source>
        <dbReference type="HAMAP-Rule" id="MF_00040"/>
    </source>
</evidence>
<evidence type="ECO:0000256" key="2">
    <source>
        <dbReference type="SAM" id="MobiDB-lite"/>
    </source>
</evidence>
<name>RRF_LIMRD</name>
<sequence length="187" mass="20784">MATGKEILNDAKQKMAKSGYALQRTLADIRAGQANASLLNSVKVEYYGAPTPLNQVASITIPEARQLLITPYDESVLEEIEKAIYASNLGLTPQNDGSSIRLIIPQLTEDRRKELVKDVKAELEKAKVAVRNVRREAMDDLKKGNKNGDFNDDEFHDLEKKVQNETDAGIKNLEDIANAKEKELMEG</sequence>